<dbReference type="EMBL" id="AE000512">
    <property type="protein sequence ID" value="AAD35413.1"/>
    <property type="molecule type" value="Genomic_DNA"/>
</dbReference>
<dbReference type="PIR" id="H72389">
    <property type="entry name" value="H72389"/>
</dbReference>
<dbReference type="RefSeq" id="NP_228137.1">
    <property type="nucleotide sequence ID" value="NC_000853.1"/>
</dbReference>
<dbReference type="RefSeq" id="WP_004083079.1">
    <property type="nucleotide sequence ID" value="NC_000853.1"/>
</dbReference>
<dbReference type="SMR" id="Q9WYG1"/>
<dbReference type="FunCoup" id="Q9WYG1">
    <property type="interactions" value="23"/>
</dbReference>
<dbReference type="STRING" id="243274.TM_0326"/>
<dbReference type="PaxDb" id="243274-THEMA_03095"/>
<dbReference type="EnsemblBacteria" id="AAD35413">
    <property type="protein sequence ID" value="AAD35413"/>
    <property type="gene ID" value="TM_0326"/>
</dbReference>
<dbReference type="KEGG" id="tma:TM0326"/>
<dbReference type="KEGG" id="tmi:THEMA_03095"/>
<dbReference type="KEGG" id="tmm:Tmari_0324"/>
<dbReference type="KEGG" id="tmw:THMA_0333"/>
<dbReference type="eggNOG" id="COG1737">
    <property type="taxonomic scope" value="Bacteria"/>
</dbReference>
<dbReference type="InParanoid" id="Q9WYG1"/>
<dbReference type="OrthoDB" id="3684496at2"/>
<dbReference type="Proteomes" id="UP000008183">
    <property type="component" value="Chromosome"/>
</dbReference>
<dbReference type="GO" id="GO:0097367">
    <property type="term" value="F:carbohydrate derivative binding"/>
    <property type="evidence" value="ECO:0007669"/>
    <property type="project" value="InterPro"/>
</dbReference>
<dbReference type="GO" id="GO:0003677">
    <property type="term" value="F:DNA binding"/>
    <property type="evidence" value="ECO:0007669"/>
    <property type="project" value="UniProtKB-KW"/>
</dbReference>
<dbReference type="GO" id="GO:0003700">
    <property type="term" value="F:DNA-binding transcription factor activity"/>
    <property type="evidence" value="ECO:0000318"/>
    <property type="project" value="GO_Central"/>
</dbReference>
<dbReference type="GO" id="GO:1901135">
    <property type="term" value="P:carbohydrate derivative metabolic process"/>
    <property type="evidence" value="ECO:0007669"/>
    <property type="project" value="InterPro"/>
</dbReference>
<dbReference type="GO" id="GO:0006355">
    <property type="term" value="P:regulation of DNA-templated transcription"/>
    <property type="evidence" value="ECO:0000318"/>
    <property type="project" value="GO_Central"/>
</dbReference>
<dbReference type="CDD" id="cd05013">
    <property type="entry name" value="SIS_RpiR"/>
    <property type="match status" value="1"/>
</dbReference>
<dbReference type="Gene3D" id="3.40.50.10490">
    <property type="entry name" value="Glucose-6-phosphate isomerase like protein, domain 1"/>
    <property type="match status" value="1"/>
</dbReference>
<dbReference type="Gene3D" id="1.10.10.10">
    <property type="entry name" value="Winged helix-like DNA-binding domain superfamily/Winged helix DNA-binding domain"/>
    <property type="match status" value="1"/>
</dbReference>
<dbReference type="InterPro" id="IPR009057">
    <property type="entry name" value="Homeodomain-like_sf"/>
</dbReference>
<dbReference type="InterPro" id="IPR000281">
    <property type="entry name" value="HTH_RpiR"/>
</dbReference>
<dbReference type="InterPro" id="IPR047640">
    <property type="entry name" value="RpiR-like"/>
</dbReference>
<dbReference type="InterPro" id="IPR035472">
    <property type="entry name" value="RpiR-like_SIS"/>
</dbReference>
<dbReference type="InterPro" id="IPR001347">
    <property type="entry name" value="SIS_dom"/>
</dbReference>
<dbReference type="InterPro" id="IPR046348">
    <property type="entry name" value="SIS_dom_sf"/>
</dbReference>
<dbReference type="InterPro" id="IPR036388">
    <property type="entry name" value="WH-like_DNA-bd_sf"/>
</dbReference>
<dbReference type="PANTHER" id="PTHR30514">
    <property type="entry name" value="GLUCOKINASE"/>
    <property type="match status" value="1"/>
</dbReference>
<dbReference type="PANTHER" id="PTHR30514:SF1">
    <property type="entry name" value="HTH-TYPE TRANSCRIPTIONAL REGULATOR HEXR-RELATED"/>
    <property type="match status" value="1"/>
</dbReference>
<dbReference type="Pfam" id="PF01418">
    <property type="entry name" value="HTH_6"/>
    <property type="match status" value="1"/>
</dbReference>
<dbReference type="Pfam" id="PF01380">
    <property type="entry name" value="SIS"/>
    <property type="match status" value="1"/>
</dbReference>
<dbReference type="SUPFAM" id="SSF46689">
    <property type="entry name" value="Homeodomain-like"/>
    <property type="match status" value="1"/>
</dbReference>
<dbReference type="SUPFAM" id="SSF53697">
    <property type="entry name" value="SIS domain"/>
    <property type="match status" value="1"/>
</dbReference>
<dbReference type="PROSITE" id="PS51071">
    <property type="entry name" value="HTH_RPIR"/>
    <property type="match status" value="1"/>
</dbReference>
<dbReference type="PROSITE" id="PS51464">
    <property type="entry name" value="SIS"/>
    <property type="match status" value="1"/>
</dbReference>
<protein>
    <recommendedName>
        <fullName>Uncharacterized HTH-type transcriptional regulator TM_0326</fullName>
    </recommendedName>
</protein>
<name>Y326_THEMA</name>
<keyword id="KW-0238">DNA-binding</keyword>
<keyword id="KW-1185">Reference proteome</keyword>
<keyword id="KW-0804">Transcription</keyword>
<keyword id="KW-0805">Transcription regulation</keyword>
<feature type="chain" id="PRO_0000068632" description="Uncharacterized HTH-type transcriptional regulator TM_0326">
    <location>
        <begin position="1"/>
        <end position="280"/>
    </location>
</feature>
<feature type="domain" description="HTH rpiR-type" evidence="1">
    <location>
        <begin position="1"/>
        <end position="78"/>
    </location>
</feature>
<feature type="domain" description="SIS" evidence="2">
    <location>
        <begin position="123"/>
        <end position="263"/>
    </location>
</feature>
<feature type="DNA-binding region" description="H-T-H motif" evidence="1">
    <location>
        <begin position="37"/>
        <end position="57"/>
    </location>
</feature>
<proteinExistence type="predicted"/>
<gene>
    <name type="ordered locus">TM_0326</name>
</gene>
<reference key="1">
    <citation type="journal article" date="1999" name="Nature">
        <title>Evidence for lateral gene transfer between Archaea and Bacteria from genome sequence of Thermotoga maritima.</title>
        <authorList>
            <person name="Nelson K.E."/>
            <person name="Clayton R.A."/>
            <person name="Gill S.R."/>
            <person name="Gwinn M.L."/>
            <person name="Dodson R.J."/>
            <person name="Haft D.H."/>
            <person name="Hickey E.K."/>
            <person name="Peterson J.D."/>
            <person name="Nelson W.C."/>
            <person name="Ketchum K.A."/>
            <person name="McDonald L.A."/>
            <person name="Utterback T.R."/>
            <person name="Malek J.A."/>
            <person name="Linher K.D."/>
            <person name="Garrett M.M."/>
            <person name="Stewart A.M."/>
            <person name="Cotton M.D."/>
            <person name="Pratt M.S."/>
            <person name="Phillips C.A."/>
            <person name="Richardson D.L."/>
            <person name="Heidelberg J.F."/>
            <person name="Sutton G.G."/>
            <person name="Fleischmann R.D."/>
            <person name="Eisen J.A."/>
            <person name="White O."/>
            <person name="Salzberg S.L."/>
            <person name="Smith H.O."/>
            <person name="Venter J.C."/>
            <person name="Fraser C.M."/>
        </authorList>
    </citation>
    <scope>NUCLEOTIDE SEQUENCE [LARGE SCALE GENOMIC DNA]</scope>
    <source>
        <strain>ATCC 43589 / DSM 3109 / JCM 10099 / NBRC 100826 / MSB8</strain>
    </source>
</reference>
<accession>Q9WYG1</accession>
<evidence type="ECO:0000255" key="1">
    <source>
        <dbReference type="PROSITE-ProRule" id="PRU00390"/>
    </source>
</evidence>
<evidence type="ECO:0000255" key="2">
    <source>
        <dbReference type="PROSITE-ProRule" id="PRU00797"/>
    </source>
</evidence>
<sequence length="280" mass="31117">MDVIQRIKEKYDEFTNAEKKIADTILSDPKGIIESSISDLSEKAGVKSEASVVKFYKKLGLNSFQQFKVLLAQSISRAPLEIVYEDVSSEDDTKTITEKIFKATVRAILDTLNWLDIDSIERTVDLFKNAQRIIFIGFAASAAVAFDAFHKFTRIGKNCLFSNDEHIIAAILATASPSDLLVAISHTGETISVVNFAKKAKEMKMPVVTITGNRKSTLAKYSDVVLATNTKETKIRTDAMTSRIVQLVILDTIYTLLAARDPRAIENLNKSRLAVSELKY</sequence>
<organism>
    <name type="scientific">Thermotoga maritima (strain ATCC 43589 / DSM 3109 / JCM 10099 / NBRC 100826 / MSB8)</name>
    <dbReference type="NCBI Taxonomy" id="243274"/>
    <lineage>
        <taxon>Bacteria</taxon>
        <taxon>Thermotogati</taxon>
        <taxon>Thermotogota</taxon>
        <taxon>Thermotogae</taxon>
        <taxon>Thermotogales</taxon>
        <taxon>Thermotogaceae</taxon>
        <taxon>Thermotoga</taxon>
    </lineage>
</organism>